<protein>
    <recommendedName>
        <fullName>Beta-defensin 109</fullName>
    </recommendedName>
    <alternativeName>
        <fullName>Defensin, beta 109</fullName>
    </alternativeName>
</protein>
<reference key="1">
    <citation type="journal article" date="2005" name="Physiol. Genomics">
        <title>Cross-species analysis of the mammalian beta-defensin gene family: presence of syntenic gene clusters and preferential expression in the male reproductive tract.</title>
        <authorList>
            <person name="Patil A.A."/>
            <person name="Cai Y."/>
            <person name="Sang Y."/>
            <person name="Blecha F."/>
            <person name="Zhang G."/>
        </authorList>
    </citation>
    <scope>NUCLEOTIDE SEQUENCE [MRNA]</scope>
</reference>
<feature type="signal peptide" evidence="2">
    <location>
        <begin position="1"/>
        <end position="22"/>
    </location>
</feature>
<feature type="chain" id="PRO_0000045334" description="Beta-defensin 109">
    <location>
        <begin position="23"/>
        <end position="87"/>
    </location>
</feature>
<feature type="disulfide bond" evidence="1">
    <location>
        <begin position="31"/>
        <end position="59"/>
    </location>
</feature>
<feature type="disulfide bond" evidence="1">
    <location>
        <begin position="38"/>
        <end position="53"/>
    </location>
</feature>
<feature type="disulfide bond" evidence="1">
    <location>
        <begin position="43"/>
        <end position="60"/>
    </location>
</feature>
<name>DB109_PANTR</name>
<comment type="function">
    <text evidence="1">Has antibacterial activity.</text>
</comment>
<comment type="subcellular location">
    <subcellularLocation>
        <location evidence="1">Secreted</location>
    </subcellularLocation>
</comment>
<comment type="similarity">
    <text evidence="3">Belongs to the beta-defensin family.</text>
</comment>
<dbReference type="EMBL" id="DQ012062">
    <property type="protein sequence ID" value="AAY59793.1"/>
    <property type="molecule type" value="mRNA"/>
</dbReference>
<dbReference type="SMR" id="Q30KL7"/>
<dbReference type="FunCoup" id="Q30KL7">
    <property type="interactions" value="164"/>
</dbReference>
<dbReference type="PaxDb" id="9598-ENSPTRP00000050475"/>
<dbReference type="KEGG" id="ptr:100170034"/>
<dbReference type="eggNOG" id="ENOG502TEFU">
    <property type="taxonomic scope" value="Eukaryota"/>
</dbReference>
<dbReference type="HOGENOM" id="CLU_191088_0_0_1"/>
<dbReference type="InParanoid" id="Q30KL7"/>
<dbReference type="Proteomes" id="UP000002277">
    <property type="component" value="Unplaced"/>
</dbReference>
<dbReference type="GO" id="GO:0005615">
    <property type="term" value="C:extracellular space"/>
    <property type="evidence" value="ECO:0000318"/>
    <property type="project" value="GO_Central"/>
</dbReference>
<dbReference type="GO" id="GO:0005796">
    <property type="term" value="C:Golgi lumen"/>
    <property type="evidence" value="ECO:0007669"/>
    <property type="project" value="UniProtKB-ARBA"/>
</dbReference>
<dbReference type="GO" id="GO:0031731">
    <property type="term" value="F:CCR6 chemokine receptor binding"/>
    <property type="evidence" value="ECO:0000318"/>
    <property type="project" value="GO_Central"/>
</dbReference>
<dbReference type="GO" id="GO:0042056">
    <property type="term" value="F:chemoattractant activity"/>
    <property type="evidence" value="ECO:0000318"/>
    <property type="project" value="GO_Central"/>
</dbReference>
<dbReference type="GO" id="GO:0060326">
    <property type="term" value="P:cell chemotaxis"/>
    <property type="evidence" value="ECO:0000318"/>
    <property type="project" value="GO_Central"/>
</dbReference>
<dbReference type="GO" id="GO:0042742">
    <property type="term" value="P:defense response to bacterium"/>
    <property type="evidence" value="ECO:0000318"/>
    <property type="project" value="GO_Central"/>
</dbReference>
<dbReference type="InterPro" id="IPR006080">
    <property type="entry name" value="Beta/alpha-defensin_C"/>
</dbReference>
<dbReference type="PANTHER" id="PTHR20515">
    <property type="entry name" value="BETA-DEFENSIN"/>
    <property type="match status" value="1"/>
</dbReference>
<dbReference type="PANTHER" id="PTHR20515:SF3">
    <property type="entry name" value="BETA-DEFENSIN 109B-RELATED"/>
    <property type="match status" value="1"/>
</dbReference>
<dbReference type="SMART" id="SM00048">
    <property type="entry name" value="DEFSN"/>
    <property type="match status" value="1"/>
</dbReference>
<dbReference type="SUPFAM" id="SSF57392">
    <property type="entry name" value="Defensin-like"/>
    <property type="match status" value="1"/>
</dbReference>
<sequence length="87" mass="9954">MRLHLLLLILLLFSILLSPVRGGLGPAEGHCLNLSGVCRRDVCKVVEDQIGACRRRMKCCRAWWILMPIPTPLIMSDYQEPLKRKLK</sequence>
<accession>Q30KL7</accession>
<keyword id="KW-0044">Antibiotic</keyword>
<keyword id="KW-0929">Antimicrobial</keyword>
<keyword id="KW-0211">Defensin</keyword>
<keyword id="KW-1015">Disulfide bond</keyword>
<keyword id="KW-1185">Reference proteome</keyword>
<keyword id="KW-0964">Secreted</keyword>
<keyword id="KW-0732">Signal</keyword>
<proteinExistence type="inferred from homology"/>
<organism>
    <name type="scientific">Pan troglodytes</name>
    <name type="common">Chimpanzee</name>
    <dbReference type="NCBI Taxonomy" id="9598"/>
    <lineage>
        <taxon>Eukaryota</taxon>
        <taxon>Metazoa</taxon>
        <taxon>Chordata</taxon>
        <taxon>Craniata</taxon>
        <taxon>Vertebrata</taxon>
        <taxon>Euteleostomi</taxon>
        <taxon>Mammalia</taxon>
        <taxon>Eutheria</taxon>
        <taxon>Euarchontoglires</taxon>
        <taxon>Primates</taxon>
        <taxon>Haplorrhini</taxon>
        <taxon>Catarrhini</taxon>
        <taxon>Hominidae</taxon>
        <taxon>Pan</taxon>
    </lineage>
</organism>
<gene>
    <name type="primary">DEFB109</name>
</gene>
<evidence type="ECO:0000250" key="1"/>
<evidence type="ECO:0000255" key="2"/>
<evidence type="ECO:0000305" key="3"/>